<evidence type="ECO:0000255" key="1">
    <source>
        <dbReference type="HAMAP-Rule" id="MF_00829"/>
    </source>
</evidence>
<name>Y1731_LISMF</name>
<comment type="similarity">
    <text evidence="1">Belongs to the UPF0435 family.</text>
</comment>
<organism>
    <name type="scientific">Listeria monocytogenes serotype 4b (strain F2365)</name>
    <dbReference type="NCBI Taxonomy" id="265669"/>
    <lineage>
        <taxon>Bacteria</taxon>
        <taxon>Bacillati</taxon>
        <taxon>Bacillota</taxon>
        <taxon>Bacilli</taxon>
        <taxon>Bacillales</taxon>
        <taxon>Listeriaceae</taxon>
        <taxon>Listeria</taxon>
    </lineage>
</organism>
<gene>
    <name type="ordered locus">LMOf2365_1731</name>
</gene>
<proteinExistence type="inferred from homology"/>
<dbReference type="EMBL" id="AE017262">
    <property type="protein sequence ID" value="AAT04504.1"/>
    <property type="molecule type" value="Genomic_DNA"/>
</dbReference>
<dbReference type="RefSeq" id="WP_003726640.1">
    <property type="nucleotide sequence ID" value="NC_002973.6"/>
</dbReference>
<dbReference type="SMR" id="Q71YW0"/>
<dbReference type="DNASU" id="2799633"/>
<dbReference type="KEGG" id="lmf:LMOf2365_1731"/>
<dbReference type="HOGENOM" id="CLU_199533_1_0_9"/>
<dbReference type="HAMAP" id="MF_00829">
    <property type="entry name" value="UPF0435"/>
    <property type="match status" value="1"/>
</dbReference>
<dbReference type="InterPro" id="IPR009507">
    <property type="entry name" value="UPF0435"/>
</dbReference>
<dbReference type="Pfam" id="PF06569">
    <property type="entry name" value="DUF1128"/>
    <property type="match status" value="1"/>
</dbReference>
<sequence>MNLETPSQENLNFMLTEITTKLKMVNVGVFENLELDSVDYNALIDIYQLIKRKSNFSPREMQLFAEELRRIRK</sequence>
<reference key="1">
    <citation type="journal article" date="2004" name="Nucleic Acids Res.">
        <title>Whole genome comparisons of serotype 4b and 1/2a strains of the food-borne pathogen Listeria monocytogenes reveal new insights into the core genome components of this species.</title>
        <authorList>
            <person name="Nelson K.E."/>
            <person name="Fouts D.E."/>
            <person name="Mongodin E.F."/>
            <person name="Ravel J."/>
            <person name="DeBoy R.T."/>
            <person name="Kolonay J.F."/>
            <person name="Rasko D.A."/>
            <person name="Angiuoli S.V."/>
            <person name="Gill S.R."/>
            <person name="Paulsen I.T."/>
            <person name="Peterson J.D."/>
            <person name="White O."/>
            <person name="Nelson W.C."/>
            <person name="Nierman W.C."/>
            <person name="Beanan M.J."/>
            <person name="Brinkac L.M."/>
            <person name="Daugherty S.C."/>
            <person name="Dodson R.J."/>
            <person name="Durkin A.S."/>
            <person name="Madupu R."/>
            <person name="Haft D.H."/>
            <person name="Selengut J."/>
            <person name="Van Aken S.E."/>
            <person name="Khouri H.M."/>
            <person name="Fedorova N."/>
            <person name="Forberger H.A."/>
            <person name="Tran B."/>
            <person name="Kathariou S."/>
            <person name="Wonderling L.D."/>
            <person name="Uhlich G.A."/>
            <person name="Bayles D.O."/>
            <person name="Luchansky J.B."/>
            <person name="Fraser C.M."/>
        </authorList>
    </citation>
    <scope>NUCLEOTIDE SEQUENCE [LARGE SCALE GENOMIC DNA]</scope>
    <source>
        <strain>F2365</strain>
    </source>
</reference>
<protein>
    <recommendedName>
        <fullName evidence="1">UPF0435 protein LMOf2365_1731</fullName>
    </recommendedName>
</protein>
<accession>Q71YW0</accession>
<feature type="chain" id="PRO_0000291412" description="UPF0435 protein LMOf2365_1731">
    <location>
        <begin position="1"/>
        <end position="73"/>
    </location>
</feature>